<gene>
    <name evidence="2" type="primary">DERL1</name>
</gene>
<dbReference type="EMBL" id="CR859268">
    <property type="protein sequence ID" value="CAH91447.1"/>
    <property type="molecule type" value="mRNA"/>
</dbReference>
<dbReference type="RefSeq" id="NP_001125851.1">
    <property type="nucleotide sequence ID" value="NM_001132379.1"/>
</dbReference>
<dbReference type="SMR" id="Q5R9W3"/>
<dbReference type="FunCoup" id="Q5R9W3">
    <property type="interactions" value="1831"/>
</dbReference>
<dbReference type="STRING" id="9601.ENSPPYP00000021151"/>
<dbReference type="Ensembl" id="ENSPPYT00000053447.1">
    <property type="protein sequence ID" value="ENSPPYP00000027809.1"/>
    <property type="gene ID" value="ENSPPYG00000018852.3"/>
</dbReference>
<dbReference type="GeneID" id="100172781"/>
<dbReference type="KEGG" id="pon:100172781"/>
<dbReference type="CTD" id="79139"/>
<dbReference type="eggNOG" id="KOG0858">
    <property type="taxonomic scope" value="Eukaryota"/>
</dbReference>
<dbReference type="GeneTree" id="ENSGT00530000063156"/>
<dbReference type="HOGENOM" id="CLU_051898_3_1_1"/>
<dbReference type="InParanoid" id="Q5R9W3"/>
<dbReference type="OMA" id="LWRCVTS"/>
<dbReference type="OrthoDB" id="19102at2759"/>
<dbReference type="Proteomes" id="UP000001595">
    <property type="component" value="Chromosome 8"/>
</dbReference>
<dbReference type="GO" id="GO:0036513">
    <property type="term" value="C:Derlin-1 retrotranslocation complex"/>
    <property type="evidence" value="ECO:0007669"/>
    <property type="project" value="Ensembl"/>
</dbReference>
<dbReference type="GO" id="GO:0036502">
    <property type="term" value="C:Derlin-1-VIMP complex"/>
    <property type="evidence" value="ECO:0007669"/>
    <property type="project" value="Ensembl"/>
</dbReference>
<dbReference type="GO" id="GO:0005769">
    <property type="term" value="C:early endosome"/>
    <property type="evidence" value="ECO:0007669"/>
    <property type="project" value="Ensembl"/>
</dbReference>
<dbReference type="GO" id="GO:0044322">
    <property type="term" value="C:endoplasmic reticulum quality control compartment"/>
    <property type="evidence" value="ECO:0007669"/>
    <property type="project" value="Ensembl"/>
</dbReference>
<dbReference type="GO" id="GO:0005770">
    <property type="term" value="C:late endosome"/>
    <property type="evidence" value="ECO:0007669"/>
    <property type="project" value="Ensembl"/>
</dbReference>
<dbReference type="GO" id="GO:0051117">
    <property type="term" value="F:ATPase binding"/>
    <property type="evidence" value="ECO:0000250"/>
    <property type="project" value="UniProtKB"/>
</dbReference>
<dbReference type="GO" id="GO:0042802">
    <property type="term" value="F:identical protein binding"/>
    <property type="evidence" value="ECO:0007669"/>
    <property type="project" value="Ensembl"/>
</dbReference>
<dbReference type="GO" id="GO:0042288">
    <property type="term" value="F:MHC class I protein binding"/>
    <property type="evidence" value="ECO:0007669"/>
    <property type="project" value="Ensembl"/>
</dbReference>
<dbReference type="GO" id="GO:0005047">
    <property type="term" value="F:signal recognition particle binding"/>
    <property type="evidence" value="ECO:0000250"/>
    <property type="project" value="UniProtKB"/>
</dbReference>
<dbReference type="GO" id="GO:0031625">
    <property type="term" value="F:ubiquitin protein ligase binding"/>
    <property type="evidence" value="ECO:0007669"/>
    <property type="project" value="Ensembl"/>
</dbReference>
<dbReference type="GO" id="GO:1990381">
    <property type="term" value="F:ubiquitin-specific protease binding"/>
    <property type="evidence" value="ECO:0007669"/>
    <property type="project" value="Ensembl"/>
</dbReference>
<dbReference type="GO" id="GO:0071218">
    <property type="term" value="P:cellular response to misfolded protein"/>
    <property type="evidence" value="ECO:0007669"/>
    <property type="project" value="Ensembl"/>
</dbReference>
<dbReference type="GO" id="GO:0030968">
    <property type="term" value="P:endoplasmic reticulum unfolded protein response"/>
    <property type="evidence" value="ECO:0007669"/>
    <property type="project" value="Ensembl"/>
</dbReference>
<dbReference type="GO" id="GO:0031398">
    <property type="term" value="P:positive regulation of protein ubiquitination"/>
    <property type="evidence" value="ECO:0007669"/>
    <property type="project" value="Ensembl"/>
</dbReference>
<dbReference type="GO" id="GO:0043161">
    <property type="term" value="P:proteasome-mediated ubiquitin-dependent protein catabolic process"/>
    <property type="evidence" value="ECO:0007669"/>
    <property type="project" value="Ensembl"/>
</dbReference>
<dbReference type="GO" id="GO:0031648">
    <property type="term" value="P:protein destabilization"/>
    <property type="evidence" value="ECO:0000250"/>
    <property type="project" value="UniProtKB"/>
</dbReference>
<dbReference type="GO" id="GO:0030970">
    <property type="term" value="P:retrograde protein transport, ER to cytosol"/>
    <property type="evidence" value="ECO:0007669"/>
    <property type="project" value="Ensembl"/>
</dbReference>
<dbReference type="InterPro" id="IPR007599">
    <property type="entry name" value="DER1"/>
</dbReference>
<dbReference type="InterPro" id="IPR035952">
    <property type="entry name" value="Rhomboid-like_sf"/>
</dbReference>
<dbReference type="PANTHER" id="PTHR11009">
    <property type="entry name" value="DER1-LIKE PROTEIN, DERLIN"/>
    <property type="match status" value="1"/>
</dbReference>
<dbReference type="Pfam" id="PF04511">
    <property type="entry name" value="DER1"/>
    <property type="match status" value="1"/>
</dbReference>
<dbReference type="SUPFAM" id="SSF144091">
    <property type="entry name" value="Rhomboid-like"/>
    <property type="match status" value="1"/>
</dbReference>
<keyword id="KW-0007">Acetylation</keyword>
<keyword id="KW-0256">Endoplasmic reticulum</keyword>
<keyword id="KW-0472">Membrane</keyword>
<keyword id="KW-0597">Phosphoprotein</keyword>
<keyword id="KW-0653">Protein transport</keyword>
<keyword id="KW-1185">Reference proteome</keyword>
<keyword id="KW-0812">Transmembrane</keyword>
<keyword id="KW-1133">Transmembrane helix</keyword>
<keyword id="KW-0813">Transport</keyword>
<keyword id="KW-0834">Unfolded protein response</keyword>
<organism>
    <name type="scientific">Pongo abelii</name>
    <name type="common">Sumatran orangutan</name>
    <name type="synonym">Pongo pygmaeus abelii</name>
    <dbReference type="NCBI Taxonomy" id="9601"/>
    <lineage>
        <taxon>Eukaryota</taxon>
        <taxon>Metazoa</taxon>
        <taxon>Chordata</taxon>
        <taxon>Craniata</taxon>
        <taxon>Vertebrata</taxon>
        <taxon>Euteleostomi</taxon>
        <taxon>Mammalia</taxon>
        <taxon>Eutheria</taxon>
        <taxon>Euarchontoglires</taxon>
        <taxon>Primates</taxon>
        <taxon>Haplorrhini</taxon>
        <taxon>Catarrhini</taxon>
        <taxon>Hominidae</taxon>
        <taxon>Pongo</taxon>
    </lineage>
</organism>
<name>DERL1_PONAB</name>
<comment type="function">
    <text evidence="2">Functional component of endoplasmic reticulum-associated degradation (ERAD) for misfolded lumenal proteins. Forms homotetramers which encircle a large channel traversing the endoplasmic reticulum (ER) membrane. This allows the retrotranslocation of misfolded proteins from the ER into the cytosol where they are ubiquitinated and degraded by the proteasome. The channel has a lateral gate within the membrane which provides direct access to membrane proteins with no need to reenter the ER lumen first. May mediate the interaction between VCP and the misfolded protein. Also involved in endoplasmic reticulum stress-induced pre-emptive quality control, a mechanism that selectively attenuates the translocation of newly synthesized proteins into the endoplasmic reticulum and reroutes them to the cytosol for proteasomal degradation. By controlling the steady-state expression of the IGF1R receptor, indirectly regulates the insulin-like growth factor receptor signaling pathway.</text>
</comment>
<comment type="subunit">
    <text evidence="1 2">Homotetramer. The four subunits of the tetramer are arranged in a twofold symmetry. Forms homo- and heterooligomers with DERL2 and DERL3; binding to DERL3 is poorer than that between DERL2 and DERL3. Interacts (via SHP-box motif) with VCP. Interacts with AMFR, SELENOS, SEL1L, SELENOK and SYVN1, as well as with SEL1L-SYVN1 and VCP-SELENOS protein complexes; this interaction is weaker than that observed between DERL2 and these complexes. Interacts with NGLY1 and YOD1. Does not bind to EDEM1. Interacts with DNAJB9. Interacts with RNF103. Interacts with HM13. Interacts with XBP1 isoform 1 (via luminal/ectodomain domain); the interaction obviates the need for ectodomain shedding prior HM13/SPP-mediated XBP1 isoform 1 cleavage. Interacts with the signal recognition particle/SRP and the SRP receptor; in the process of endoplasmic reticulum stress-induced pre-emptive quality control. May interact with UBXN6. Interacts with ZFAND2B; probably through VCP. Interacts with CCDC47. Interacts with C18orf32. May interact with TRAM1. Forms a complex with SVIP and VCP/p97 (By similarity).</text>
</comment>
<comment type="subcellular location">
    <subcellularLocation>
        <location evidence="2">Endoplasmic reticulum membrane</location>
        <topology evidence="2">Multi-pass membrane protein</topology>
    </subcellularLocation>
</comment>
<comment type="similarity">
    <text evidence="4">Belongs to the derlin family.</text>
</comment>
<evidence type="ECO:0000250" key="1">
    <source>
        <dbReference type="UniProtKB" id="Q99J56"/>
    </source>
</evidence>
<evidence type="ECO:0000250" key="2">
    <source>
        <dbReference type="UniProtKB" id="Q9BUN8"/>
    </source>
</evidence>
<evidence type="ECO:0000256" key="3">
    <source>
        <dbReference type="SAM" id="MobiDB-lite"/>
    </source>
</evidence>
<evidence type="ECO:0000305" key="4"/>
<feature type="initiator methionine" description="Removed" evidence="2">
    <location>
        <position position="1"/>
    </location>
</feature>
<feature type="chain" id="PRO_0000219044" description="Derlin-1">
    <location>
        <begin position="2"/>
        <end position="251"/>
    </location>
</feature>
<feature type="topological domain" description="Cytoplasmic" evidence="2">
    <location>
        <begin position="2"/>
        <end position="15"/>
    </location>
</feature>
<feature type="transmembrane region" description="Helical; Name=1" evidence="2">
    <location>
        <begin position="16"/>
        <end position="31"/>
    </location>
</feature>
<feature type="topological domain" description="Lumenal" evidence="2">
    <location>
        <begin position="32"/>
        <end position="69"/>
    </location>
</feature>
<feature type="transmembrane region" description="Helical; Name=2" evidence="2">
    <location>
        <begin position="70"/>
        <end position="89"/>
    </location>
</feature>
<feature type="topological domain" description="Cytoplasmic" evidence="2">
    <location>
        <begin position="90"/>
        <end position="94"/>
    </location>
</feature>
<feature type="transmembrane region" description="Helical; Name=3" evidence="2">
    <location>
        <begin position="95"/>
        <end position="115"/>
    </location>
</feature>
<feature type="topological domain" description="Lumenal" evidence="2">
    <location>
        <begin position="116"/>
        <end position="122"/>
    </location>
</feature>
<feature type="transmembrane region" description="Helical; Name=4" evidence="2">
    <location>
        <begin position="123"/>
        <end position="137"/>
    </location>
</feature>
<feature type="topological domain" description="Cytoplasmic" evidence="2">
    <location>
        <begin position="138"/>
        <end position="154"/>
    </location>
</feature>
<feature type="transmembrane region" description="Helical; Name=5" evidence="2">
    <location>
        <begin position="155"/>
        <end position="166"/>
    </location>
</feature>
<feature type="topological domain" description="Lumenal" evidence="2">
    <location>
        <begin position="167"/>
        <end position="170"/>
    </location>
</feature>
<feature type="transmembrane region" description="Helical; Name=6" evidence="2">
    <location>
        <begin position="171"/>
        <end position="189"/>
    </location>
</feature>
<feature type="topological domain" description="Cytoplasmic" evidence="2">
    <location>
        <begin position="190"/>
        <end position="251"/>
    </location>
</feature>
<feature type="region of interest" description="Disordered" evidence="3">
    <location>
        <begin position="229"/>
        <end position="251"/>
    </location>
</feature>
<feature type="short sequence motif" description="SHP-box" evidence="2">
    <location>
        <begin position="241"/>
        <end position="248"/>
    </location>
</feature>
<feature type="modified residue" description="N-acetylserine" evidence="2">
    <location>
        <position position="2"/>
    </location>
</feature>
<feature type="modified residue" description="Phosphoserine" evidence="2">
    <location>
        <position position="201"/>
    </location>
</feature>
<feature type="modified residue" description="Phosphothreonine" evidence="2">
    <location>
        <position position="202"/>
    </location>
</feature>
<feature type="modified residue" description="Phosphoserine" evidence="2">
    <location>
        <position position="226"/>
    </location>
</feature>
<reference key="1">
    <citation type="submission" date="2004-11" db="EMBL/GenBank/DDBJ databases">
        <authorList>
            <consortium name="The German cDNA consortium"/>
        </authorList>
    </citation>
    <scope>NUCLEOTIDE SEQUENCE [LARGE SCALE MRNA]</scope>
    <source>
        <tissue>Heart</tissue>
    </source>
</reference>
<proteinExistence type="evidence at transcript level"/>
<protein>
    <recommendedName>
        <fullName evidence="4">Derlin-1</fullName>
    </recommendedName>
    <alternativeName>
        <fullName evidence="2">Der1-like protein 1</fullName>
    </alternativeName>
</protein>
<sequence>MSDIGDWFRSIPAITRYWFAATVAVPLVGKLGLISPAYLFLWPEAFLYRFQIWRPITATFYFPVGPGTGFLYLVNLYFLYHYSTRLETGAFDGRPADYLFMLLFNWICIVITGLAMDMQLLMIPLIMSVLYVWAQLNRDMIVSFWFGTRFKACYLPWVILGFNYIIGGSVINELIGNLVGHLYFFLMFRYPMDLGGRNFLSTPQFLYRWLPSRRGGVSGFGVPPASMRRAADQNGGGGRHNWGQGFRLGDQ</sequence>
<accession>Q5R9W3</accession>